<evidence type="ECO:0000255" key="1">
    <source>
        <dbReference type="PROSITE-ProRule" id="PRU00108"/>
    </source>
</evidence>
<evidence type="ECO:0000256" key="2">
    <source>
        <dbReference type="SAM" id="MobiDB-lite"/>
    </source>
</evidence>
<evidence type="ECO:0000305" key="3"/>
<organism>
    <name type="scientific">Rattus norvegicus</name>
    <name type="common">Rat</name>
    <dbReference type="NCBI Taxonomy" id="10116"/>
    <lineage>
        <taxon>Eukaryota</taxon>
        <taxon>Metazoa</taxon>
        <taxon>Chordata</taxon>
        <taxon>Craniata</taxon>
        <taxon>Vertebrata</taxon>
        <taxon>Euteleostomi</taxon>
        <taxon>Mammalia</taxon>
        <taxon>Eutheria</taxon>
        <taxon>Euarchontoglires</taxon>
        <taxon>Glires</taxon>
        <taxon>Rodentia</taxon>
        <taxon>Myomorpha</taxon>
        <taxon>Muroidea</taxon>
        <taxon>Muridae</taxon>
        <taxon>Murinae</taxon>
        <taxon>Rattus</taxon>
    </lineage>
</organism>
<proteinExistence type="evidence at transcript level"/>
<reference key="1">
    <citation type="journal article" date="1992" name="J. Biol. Chem.">
        <title>Molecular cloning of a homeobox transcription factor from adult aortic smooth muscle.</title>
        <authorList>
            <person name="Patel C.V."/>
            <person name="Gorski D.H."/>
            <person name="Lepage D.F."/>
            <person name="Lincecum J."/>
            <person name="Walsh K."/>
        </authorList>
    </citation>
    <scope>NUCLEOTIDE SEQUENCE [MRNA]</scope>
    <source>
        <tissue>Aorta</tissue>
    </source>
</reference>
<reference key="2">
    <citation type="journal article" date="1994" name="BioTechniques">
        <title>Cloning and sequence analysis of homeobox transcription factor cDNAs with an inosine-containing probe.</title>
        <authorList>
            <person name="Gorski D.H."/>
            <person name="LePage D.F."/>
            <person name="Walsh K."/>
        </authorList>
    </citation>
    <scope>NUCLEOTIDE SEQUENCE [MRNA]</scope>
</reference>
<comment type="function">
    <text>Sequence-specific transcription factor which is part of a developmental regulatory system that provides cells with specific positional identities on the anterior-posterior axis.</text>
</comment>
<comment type="subcellular location">
    <subcellularLocation>
        <location>Nucleus</location>
    </subcellularLocation>
</comment>
<comment type="similarity">
    <text evidence="3">Belongs to the Antp homeobox family. Proboscipedia subfamily.</text>
</comment>
<feature type="chain" id="PRO_0000200038" description="Homeobox protein Hox-A2">
    <location>
        <begin position="1"/>
        <end position="372"/>
    </location>
</feature>
<feature type="DNA-binding region" description="Homeobox" evidence="1">
    <location>
        <begin position="139"/>
        <end position="198"/>
    </location>
</feature>
<feature type="region of interest" description="Disordered" evidence="2">
    <location>
        <begin position="42"/>
        <end position="96"/>
    </location>
</feature>
<feature type="region of interest" description="Disordered" evidence="2">
    <location>
        <begin position="194"/>
        <end position="225"/>
    </location>
</feature>
<feature type="short sequence motif" description="Antp-type hexapeptide">
    <location>
        <begin position="96"/>
        <end position="101"/>
    </location>
</feature>
<gene>
    <name type="primary">Hoxa2</name>
    <name type="synonym">Hox-1.11</name>
    <name type="synonym">Hoxa-2</name>
</gene>
<dbReference type="EMBL" id="M91802">
    <property type="protein sequence ID" value="AAA67846.1"/>
    <property type="molecule type" value="mRNA"/>
</dbReference>
<dbReference type="PIR" id="I52196">
    <property type="entry name" value="I52196"/>
</dbReference>
<dbReference type="RefSeq" id="NP_036713.2">
    <property type="nucleotide sequence ID" value="NM_012581.2"/>
</dbReference>
<dbReference type="SMR" id="P31246"/>
<dbReference type="FunCoup" id="P31246">
    <property type="interactions" value="114"/>
</dbReference>
<dbReference type="STRING" id="10116.ENSRNOP00000008023"/>
<dbReference type="PhosphoSitePlus" id="P31246"/>
<dbReference type="PaxDb" id="10116-ENSRNOP00000008023"/>
<dbReference type="GeneID" id="103690123"/>
<dbReference type="KEGG" id="rno:103690123"/>
<dbReference type="UCSC" id="RGD:2813">
    <property type="organism name" value="rat"/>
</dbReference>
<dbReference type="AGR" id="RGD:11468112"/>
<dbReference type="CTD" id="3199"/>
<dbReference type="RGD" id="11468112">
    <property type="gene designation" value="Hoxa2"/>
</dbReference>
<dbReference type="eggNOG" id="KOG0489">
    <property type="taxonomic scope" value="Eukaryota"/>
</dbReference>
<dbReference type="InParanoid" id="P31246"/>
<dbReference type="OrthoDB" id="6159439at2759"/>
<dbReference type="PhylomeDB" id="P31246"/>
<dbReference type="PRO" id="PR:P31246"/>
<dbReference type="Proteomes" id="UP000002494">
    <property type="component" value="Unplaced"/>
</dbReference>
<dbReference type="GO" id="GO:0005634">
    <property type="term" value="C:nucleus"/>
    <property type="evidence" value="ECO:0000266"/>
    <property type="project" value="RGD"/>
</dbReference>
<dbReference type="GO" id="GO:0003700">
    <property type="term" value="F:DNA-binding transcription factor activity"/>
    <property type="evidence" value="ECO:0000304"/>
    <property type="project" value="RGD"/>
</dbReference>
<dbReference type="GO" id="GO:0000981">
    <property type="term" value="F:DNA-binding transcription factor activity, RNA polymerase II-specific"/>
    <property type="evidence" value="ECO:0000318"/>
    <property type="project" value="GO_Central"/>
</dbReference>
<dbReference type="GO" id="GO:0001227">
    <property type="term" value="F:DNA-binding transcription repressor activity, RNA polymerase II-specific"/>
    <property type="evidence" value="ECO:0000266"/>
    <property type="project" value="RGD"/>
</dbReference>
<dbReference type="GO" id="GO:0000978">
    <property type="term" value="F:RNA polymerase II cis-regulatory region sequence-specific DNA binding"/>
    <property type="evidence" value="ECO:0000266"/>
    <property type="project" value="RGD"/>
</dbReference>
<dbReference type="GO" id="GO:0043565">
    <property type="term" value="F:sequence-specific DNA binding"/>
    <property type="evidence" value="ECO:0000266"/>
    <property type="project" value="RGD"/>
</dbReference>
<dbReference type="GO" id="GO:1990837">
    <property type="term" value="F:sequence-specific double-stranded DNA binding"/>
    <property type="evidence" value="ECO:0000266"/>
    <property type="project" value="RGD"/>
</dbReference>
<dbReference type="GO" id="GO:0009952">
    <property type="term" value="P:anterior/posterior pattern specification"/>
    <property type="evidence" value="ECO:0000266"/>
    <property type="project" value="RGD"/>
</dbReference>
<dbReference type="GO" id="GO:0035284">
    <property type="term" value="P:brain segmentation"/>
    <property type="evidence" value="ECO:0000266"/>
    <property type="project" value="RGD"/>
</dbReference>
<dbReference type="GO" id="GO:0045165">
    <property type="term" value="P:cell fate commitment"/>
    <property type="evidence" value="ECO:0000266"/>
    <property type="project" value="RGD"/>
</dbReference>
<dbReference type="GO" id="GO:0001709">
    <property type="term" value="P:cell fate determination"/>
    <property type="evidence" value="ECO:0000266"/>
    <property type="project" value="RGD"/>
</dbReference>
<dbReference type="GO" id="GO:0071300">
    <property type="term" value="P:cellular response to retinoic acid"/>
    <property type="evidence" value="ECO:0000266"/>
    <property type="project" value="RGD"/>
</dbReference>
<dbReference type="GO" id="GO:0009953">
    <property type="term" value="P:dorsal/ventral pattern formation"/>
    <property type="evidence" value="ECO:0000266"/>
    <property type="project" value="RGD"/>
</dbReference>
<dbReference type="GO" id="GO:0048706">
    <property type="term" value="P:embryonic skeletal system development"/>
    <property type="evidence" value="ECO:0000266"/>
    <property type="project" value="RGD"/>
</dbReference>
<dbReference type="GO" id="GO:0048704">
    <property type="term" value="P:embryonic skeletal system morphogenesis"/>
    <property type="evidence" value="ECO:0000266"/>
    <property type="project" value="RGD"/>
</dbReference>
<dbReference type="GO" id="GO:0048703">
    <property type="term" value="P:embryonic viscerocranium morphogenesis"/>
    <property type="evidence" value="ECO:0000266"/>
    <property type="project" value="RGD"/>
</dbReference>
<dbReference type="GO" id="GO:0042474">
    <property type="term" value="P:middle ear morphogenesis"/>
    <property type="evidence" value="ECO:0000266"/>
    <property type="project" value="RGD"/>
</dbReference>
<dbReference type="GO" id="GO:0008045">
    <property type="term" value="P:motor neuron axon guidance"/>
    <property type="evidence" value="ECO:0000266"/>
    <property type="project" value="RGD"/>
</dbReference>
<dbReference type="GO" id="GO:0061061">
    <property type="term" value="P:muscle structure development"/>
    <property type="evidence" value="ECO:0000266"/>
    <property type="project" value="RGD"/>
</dbReference>
<dbReference type="GO" id="GO:0045665">
    <property type="term" value="P:negative regulation of neuron differentiation"/>
    <property type="evidence" value="ECO:0000266"/>
    <property type="project" value="RGD"/>
</dbReference>
<dbReference type="GO" id="GO:0045668">
    <property type="term" value="P:negative regulation of osteoblast differentiation"/>
    <property type="evidence" value="ECO:0000266"/>
    <property type="project" value="RGD"/>
</dbReference>
<dbReference type="GO" id="GO:0000122">
    <property type="term" value="P:negative regulation of transcription by RNA polymerase II"/>
    <property type="evidence" value="ECO:0000266"/>
    <property type="project" value="RGD"/>
</dbReference>
<dbReference type="GO" id="GO:0030182">
    <property type="term" value="P:neuron differentiation"/>
    <property type="evidence" value="ECO:0000266"/>
    <property type="project" value="RGD"/>
</dbReference>
<dbReference type="GO" id="GO:0002076">
    <property type="term" value="P:osteoblast development"/>
    <property type="evidence" value="ECO:0000266"/>
    <property type="project" value="RGD"/>
</dbReference>
<dbReference type="GO" id="GO:0007389">
    <property type="term" value="P:pattern specification process"/>
    <property type="evidence" value="ECO:0000266"/>
    <property type="project" value="RGD"/>
</dbReference>
<dbReference type="GO" id="GO:0060037">
    <property type="term" value="P:pharyngeal system development"/>
    <property type="evidence" value="ECO:0000266"/>
    <property type="project" value="RGD"/>
</dbReference>
<dbReference type="GO" id="GO:0045944">
    <property type="term" value="P:positive regulation of transcription by RNA polymerase II"/>
    <property type="evidence" value="ECO:0000266"/>
    <property type="project" value="RGD"/>
</dbReference>
<dbReference type="GO" id="GO:0006357">
    <property type="term" value="P:regulation of transcription by RNA polymerase II"/>
    <property type="evidence" value="ECO:0000318"/>
    <property type="project" value="GO_Central"/>
</dbReference>
<dbReference type="GO" id="GO:0021568">
    <property type="term" value="P:rhombomere 2 development"/>
    <property type="evidence" value="ECO:0000266"/>
    <property type="project" value="RGD"/>
</dbReference>
<dbReference type="GO" id="GO:0021569">
    <property type="term" value="P:rhombomere 3 development"/>
    <property type="evidence" value="ECO:0000266"/>
    <property type="project" value="RGD"/>
</dbReference>
<dbReference type="GO" id="GO:0021658">
    <property type="term" value="P:rhombomere 3 morphogenesis"/>
    <property type="evidence" value="ECO:0000266"/>
    <property type="project" value="RGD"/>
</dbReference>
<dbReference type="GO" id="GO:0007379">
    <property type="term" value="P:segment specification"/>
    <property type="evidence" value="ECO:0000266"/>
    <property type="project" value="RGD"/>
</dbReference>
<dbReference type="CDD" id="cd00086">
    <property type="entry name" value="homeodomain"/>
    <property type="match status" value="1"/>
</dbReference>
<dbReference type="FunFam" id="1.10.10.60:FF:000145">
    <property type="entry name" value="homeobox protein Hox-A2"/>
    <property type="match status" value="1"/>
</dbReference>
<dbReference type="Gene3D" id="1.10.10.60">
    <property type="entry name" value="Homeodomain-like"/>
    <property type="match status" value="1"/>
</dbReference>
<dbReference type="InterPro" id="IPR001356">
    <property type="entry name" value="HD"/>
</dbReference>
<dbReference type="InterPro" id="IPR020479">
    <property type="entry name" value="HD_metazoa"/>
</dbReference>
<dbReference type="InterPro" id="IPR001827">
    <property type="entry name" value="Homeobox_Antennapedia_CS"/>
</dbReference>
<dbReference type="InterPro" id="IPR017970">
    <property type="entry name" value="Homeobox_CS"/>
</dbReference>
<dbReference type="InterPro" id="IPR009057">
    <property type="entry name" value="Homeodomain-like_sf"/>
</dbReference>
<dbReference type="PANTHER" id="PTHR45664:SF3">
    <property type="entry name" value="HOMEOBOX PROTEIN HOX-A2"/>
    <property type="match status" value="1"/>
</dbReference>
<dbReference type="PANTHER" id="PTHR45664">
    <property type="entry name" value="PROTEIN ZERKNUELLT 1-RELATED"/>
    <property type="match status" value="1"/>
</dbReference>
<dbReference type="Pfam" id="PF00046">
    <property type="entry name" value="Homeodomain"/>
    <property type="match status" value="1"/>
</dbReference>
<dbReference type="PRINTS" id="PR00024">
    <property type="entry name" value="HOMEOBOX"/>
</dbReference>
<dbReference type="SMART" id="SM00389">
    <property type="entry name" value="HOX"/>
    <property type="match status" value="1"/>
</dbReference>
<dbReference type="SUPFAM" id="SSF46689">
    <property type="entry name" value="Homeodomain-like"/>
    <property type="match status" value="1"/>
</dbReference>
<dbReference type="PROSITE" id="PS00032">
    <property type="entry name" value="ANTENNAPEDIA"/>
    <property type="match status" value="1"/>
</dbReference>
<dbReference type="PROSITE" id="PS00027">
    <property type="entry name" value="HOMEOBOX_1"/>
    <property type="match status" value="1"/>
</dbReference>
<dbReference type="PROSITE" id="PS50071">
    <property type="entry name" value="HOMEOBOX_2"/>
    <property type="match status" value="1"/>
</dbReference>
<name>HXA2_RAT</name>
<keyword id="KW-0217">Developmental protein</keyword>
<keyword id="KW-0238">DNA-binding</keyword>
<keyword id="KW-0371">Homeobox</keyword>
<keyword id="KW-0539">Nucleus</keyword>
<keyword id="KW-1185">Reference proteome</keyword>
<keyword id="KW-0804">Transcription</keyword>
<keyword id="KW-0805">Transcription regulation</keyword>
<accession>P31246</accession>
<sequence>MNYEFEREIGFINSQPSLAECLTSFPPVADTFQSSSIKTSTLSHSTLIPPPFEQTIPSLNPGSHPRQSAGAGGRPKSSPAGSRGSPVPARALQPPEYPWMKEKKAAKKTALPPAAASTGPACLGHKESLEIADGSGGGSRRLRTAYTNTQLLELEKEFHFNKYLCRPRRVEIAALLDLTERQVKVWFQNRRMKHKRQTQCKENQNSEGKFKNLEDSDKVEEDEEEKSLFEQALSVSGALLEREGYTFQQNALSQQQAPNGHNGDSQTFPVSPLTSNEKNLKHFQHQSPTVPNCLSTMGQNCGAGLNNDSPEALEVPSLQDFNVFSTDSCLQLSDALSPSLPGSLGSPVDISADSFDFFTDTLTTIDLQHLNY</sequence>
<protein>
    <recommendedName>
        <fullName>Homeobox protein Hox-A2</fullName>
    </recommendedName>
    <alternativeName>
        <fullName>Homeobox protein Hox-1.11</fullName>
    </alternativeName>
</protein>